<protein>
    <recommendedName>
        <fullName evidence="1">Small ribosomal subunit protein uS13</fullName>
    </recommendedName>
    <alternativeName>
        <fullName evidence="3">30S ribosomal protein S13</fullName>
    </alternativeName>
</protein>
<dbReference type="EMBL" id="CP000058">
    <property type="protein sequence ID" value="AAZ33183.1"/>
    <property type="molecule type" value="Genomic_DNA"/>
</dbReference>
<dbReference type="RefSeq" id="WP_002555467.1">
    <property type="nucleotide sequence ID" value="NC_005773.3"/>
</dbReference>
<dbReference type="SMR" id="Q48D58"/>
<dbReference type="GeneID" id="96221008"/>
<dbReference type="KEGG" id="psp:PSPPH_4570"/>
<dbReference type="eggNOG" id="COG0099">
    <property type="taxonomic scope" value="Bacteria"/>
</dbReference>
<dbReference type="HOGENOM" id="CLU_103849_1_2_6"/>
<dbReference type="Proteomes" id="UP000000551">
    <property type="component" value="Chromosome"/>
</dbReference>
<dbReference type="GO" id="GO:0005829">
    <property type="term" value="C:cytosol"/>
    <property type="evidence" value="ECO:0007669"/>
    <property type="project" value="TreeGrafter"/>
</dbReference>
<dbReference type="GO" id="GO:0015935">
    <property type="term" value="C:small ribosomal subunit"/>
    <property type="evidence" value="ECO:0007669"/>
    <property type="project" value="TreeGrafter"/>
</dbReference>
<dbReference type="GO" id="GO:0019843">
    <property type="term" value="F:rRNA binding"/>
    <property type="evidence" value="ECO:0007669"/>
    <property type="project" value="UniProtKB-UniRule"/>
</dbReference>
<dbReference type="GO" id="GO:0003735">
    <property type="term" value="F:structural constituent of ribosome"/>
    <property type="evidence" value="ECO:0007669"/>
    <property type="project" value="InterPro"/>
</dbReference>
<dbReference type="GO" id="GO:0000049">
    <property type="term" value="F:tRNA binding"/>
    <property type="evidence" value="ECO:0007669"/>
    <property type="project" value="UniProtKB-UniRule"/>
</dbReference>
<dbReference type="GO" id="GO:0006412">
    <property type="term" value="P:translation"/>
    <property type="evidence" value="ECO:0007669"/>
    <property type="project" value="UniProtKB-UniRule"/>
</dbReference>
<dbReference type="FunFam" id="1.10.8.50:FF:000001">
    <property type="entry name" value="30S ribosomal protein S13"/>
    <property type="match status" value="1"/>
</dbReference>
<dbReference type="FunFam" id="4.10.910.10:FF:000001">
    <property type="entry name" value="30S ribosomal protein S13"/>
    <property type="match status" value="1"/>
</dbReference>
<dbReference type="Gene3D" id="1.10.8.50">
    <property type="match status" value="1"/>
</dbReference>
<dbReference type="Gene3D" id="4.10.910.10">
    <property type="entry name" value="30s ribosomal protein s13, domain 2"/>
    <property type="match status" value="1"/>
</dbReference>
<dbReference type="HAMAP" id="MF_01315">
    <property type="entry name" value="Ribosomal_uS13"/>
    <property type="match status" value="1"/>
</dbReference>
<dbReference type="InterPro" id="IPR027437">
    <property type="entry name" value="Rbsml_uS13_C"/>
</dbReference>
<dbReference type="InterPro" id="IPR001892">
    <property type="entry name" value="Ribosomal_uS13"/>
</dbReference>
<dbReference type="InterPro" id="IPR010979">
    <property type="entry name" value="Ribosomal_uS13-like_H2TH"/>
</dbReference>
<dbReference type="InterPro" id="IPR019980">
    <property type="entry name" value="Ribosomal_uS13_bac-type"/>
</dbReference>
<dbReference type="InterPro" id="IPR018269">
    <property type="entry name" value="Ribosomal_uS13_CS"/>
</dbReference>
<dbReference type="NCBIfam" id="TIGR03631">
    <property type="entry name" value="uS13_bact"/>
    <property type="match status" value="1"/>
</dbReference>
<dbReference type="PANTHER" id="PTHR10871">
    <property type="entry name" value="30S RIBOSOMAL PROTEIN S13/40S RIBOSOMAL PROTEIN S18"/>
    <property type="match status" value="1"/>
</dbReference>
<dbReference type="PANTHER" id="PTHR10871:SF1">
    <property type="entry name" value="SMALL RIBOSOMAL SUBUNIT PROTEIN US13M"/>
    <property type="match status" value="1"/>
</dbReference>
<dbReference type="Pfam" id="PF00416">
    <property type="entry name" value="Ribosomal_S13"/>
    <property type="match status" value="1"/>
</dbReference>
<dbReference type="PIRSF" id="PIRSF002134">
    <property type="entry name" value="Ribosomal_S13"/>
    <property type="match status" value="1"/>
</dbReference>
<dbReference type="SUPFAM" id="SSF46946">
    <property type="entry name" value="S13-like H2TH domain"/>
    <property type="match status" value="1"/>
</dbReference>
<dbReference type="PROSITE" id="PS00646">
    <property type="entry name" value="RIBOSOMAL_S13_1"/>
    <property type="match status" value="1"/>
</dbReference>
<dbReference type="PROSITE" id="PS50159">
    <property type="entry name" value="RIBOSOMAL_S13_2"/>
    <property type="match status" value="1"/>
</dbReference>
<keyword id="KW-0687">Ribonucleoprotein</keyword>
<keyword id="KW-0689">Ribosomal protein</keyword>
<keyword id="KW-0694">RNA-binding</keyword>
<keyword id="KW-0699">rRNA-binding</keyword>
<keyword id="KW-0820">tRNA-binding</keyword>
<evidence type="ECO:0000255" key="1">
    <source>
        <dbReference type="HAMAP-Rule" id="MF_01315"/>
    </source>
</evidence>
<evidence type="ECO:0000256" key="2">
    <source>
        <dbReference type="SAM" id="MobiDB-lite"/>
    </source>
</evidence>
<evidence type="ECO:0000305" key="3"/>
<sequence length="118" mass="13370">MARIAGVNIPDNKHTVISLTYIYGVGRTTAQKICATTGVNPAVKIKDLSDEQIEQLRGEVAKFTTEGDLRREINMKIKRLMDLGCYRGLRHRRGLPVRGQRTKTNARTRKGPRKPIRK</sequence>
<accession>Q48D58</accession>
<comment type="function">
    <text evidence="1">Located at the top of the head of the 30S subunit, it contacts several helices of the 16S rRNA. In the 70S ribosome it contacts the 23S rRNA (bridge B1a) and protein L5 of the 50S subunit (bridge B1b), connecting the 2 subunits; these bridges are implicated in subunit movement. Contacts the tRNAs in the A and P-sites.</text>
</comment>
<comment type="subunit">
    <text evidence="1">Part of the 30S ribosomal subunit. Forms a loose heterodimer with protein S19. Forms two bridges to the 50S subunit in the 70S ribosome.</text>
</comment>
<comment type="similarity">
    <text evidence="1">Belongs to the universal ribosomal protein uS13 family.</text>
</comment>
<organism>
    <name type="scientific">Pseudomonas savastanoi pv. phaseolicola (strain 1448A / Race 6)</name>
    <name type="common">Pseudomonas syringae pv. phaseolicola (strain 1448A / Race 6)</name>
    <dbReference type="NCBI Taxonomy" id="264730"/>
    <lineage>
        <taxon>Bacteria</taxon>
        <taxon>Pseudomonadati</taxon>
        <taxon>Pseudomonadota</taxon>
        <taxon>Gammaproteobacteria</taxon>
        <taxon>Pseudomonadales</taxon>
        <taxon>Pseudomonadaceae</taxon>
        <taxon>Pseudomonas</taxon>
    </lineage>
</organism>
<proteinExistence type="inferred from homology"/>
<name>RS13_PSE14</name>
<feature type="chain" id="PRO_0000230553" description="Small ribosomal subunit protein uS13">
    <location>
        <begin position="1"/>
        <end position="118"/>
    </location>
</feature>
<feature type="region of interest" description="Disordered" evidence="2">
    <location>
        <begin position="93"/>
        <end position="118"/>
    </location>
</feature>
<reference key="1">
    <citation type="journal article" date="2005" name="J. Bacteriol.">
        <title>Whole-genome sequence analysis of Pseudomonas syringae pv. phaseolicola 1448A reveals divergence among pathovars in genes involved in virulence and transposition.</title>
        <authorList>
            <person name="Joardar V."/>
            <person name="Lindeberg M."/>
            <person name="Jackson R.W."/>
            <person name="Selengut J."/>
            <person name="Dodson R."/>
            <person name="Brinkac L.M."/>
            <person name="Daugherty S.C."/>
            <person name="DeBoy R.T."/>
            <person name="Durkin A.S."/>
            <person name="Gwinn Giglio M."/>
            <person name="Madupu R."/>
            <person name="Nelson W.C."/>
            <person name="Rosovitz M.J."/>
            <person name="Sullivan S.A."/>
            <person name="Crabtree J."/>
            <person name="Creasy T."/>
            <person name="Davidsen T.M."/>
            <person name="Haft D.H."/>
            <person name="Zafar N."/>
            <person name="Zhou L."/>
            <person name="Halpin R."/>
            <person name="Holley T."/>
            <person name="Khouri H.M."/>
            <person name="Feldblyum T.V."/>
            <person name="White O."/>
            <person name="Fraser C.M."/>
            <person name="Chatterjee A.K."/>
            <person name="Cartinhour S."/>
            <person name="Schneider D."/>
            <person name="Mansfield J.W."/>
            <person name="Collmer A."/>
            <person name="Buell R."/>
        </authorList>
    </citation>
    <scope>NUCLEOTIDE SEQUENCE [LARGE SCALE GENOMIC DNA]</scope>
    <source>
        <strain>1448A / Race 6</strain>
    </source>
</reference>
<gene>
    <name evidence="1" type="primary">rpsM</name>
    <name type="ordered locus">PSPPH_4570</name>
</gene>